<gene>
    <name type="primary">recU</name>
    <name type="ordered locus">MYPU_0860</name>
</gene>
<proteinExistence type="inferred from homology"/>
<keyword id="KW-0963">Cytoplasm</keyword>
<keyword id="KW-0227">DNA damage</keyword>
<keyword id="KW-0233">DNA recombination</keyword>
<keyword id="KW-0234">DNA repair</keyword>
<keyword id="KW-0255">Endonuclease</keyword>
<keyword id="KW-0378">Hydrolase</keyword>
<keyword id="KW-0460">Magnesium</keyword>
<keyword id="KW-0479">Metal-binding</keyword>
<keyword id="KW-0540">Nuclease</keyword>
<keyword id="KW-1185">Reference proteome</keyword>
<organism>
    <name type="scientific">Mycoplasmopsis pulmonis (strain UAB CTIP)</name>
    <name type="common">Mycoplasma pulmonis</name>
    <dbReference type="NCBI Taxonomy" id="272635"/>
    <lineage>
        <taxon>Bacteria</taxon>
        <taxon>Bacillati</taxon>
        <taxon>Mycoplasmatota</taxon>
        <taxon>Mycoplasmoidales</taxon>
        <taxon>Metamycoplasmataceae</taxon>
        <taxon>Mycoplasmopsis</taxon>
    </lineage>
</organism>
<accession>Q98RC3</accession>
<name>RECU_MYCPU</name>
<comment type="function">
    <text evidence="1">Endonuclease that resolves Holliday junction intermediates in genetic recombination. Cleaves mobile four-strand junctions by introducing symmetrical nicks in paired strands. Promotes annealing of linear ssDNA with homologous dsDNA. Required for DNA repair, homologous recombination and chromosome segregation (By similarity).</text>
</comment>
<comment type="catalytic activity">
    <reaction evidence="2">
        <text>Endonucleolytic cleavage at a junction such as a reciprocal single-stranded crossover between two homologous DNA duplexes (Holliday junction).</text>
        <dbReference type="EC" id="3.1.21.10"/>
    </reaction>
</comment>
<comment type="cofactor">
    <cofactor evidence="1">
        <name>Mg(2+)</name>
        <dbReference type="ChEBI" id="CHEBI:18420"/>
    </cofactor>
    <text evidence="1">Binds 1 Mg(2+) ion per subunit.</text>
</comment>
<comment type="subcellular location">
    <subcellularLocation>
        <location evidence="1">Cytoplasm</location>
    </subcellularLocation>
</comment>
<comment type="similarity">
    <text evidence="3">Belongs to the RecU family.</text>
</comment>
<evidence type="ECO:0000250" key="1"/>
<evidence type="ECO:0000255" key="2">
    <source>
        <dbReference type="HAMAP-Rule" id="MF_00130"/>
    </source>
</evidence>
<evidence type="ECO:0000305" key="3"/>
<sequence>MIKKNRGMFLEKVINQSIDFYNLNDLALFEKKATPKVSKTSGVIIHKKSTVDYIGIYQGIFIAFEAKSFSGKNFSLSNIKNHQHEYLEKINKHKGLGFYFFFHEDEEKFYLMESKKLNNLTKKSISIEQIKKNALQIELSFPGIVDFLPWVKSLINN</sequence>
<feature type="chain" id="PRO_0000212319" description="Holliday junction resolvase RecU">
    <location>
        <begin position="1"/>
        <end position="157"/>
    </location>
</feature>
<feature type="binding site" evidence="1">
    <location>
        <position position="50"/>
    </location>
    <ligand>
        <name>Mg(2+)</name>
        <dbReference type="ChEBI" id="CHEBI:18420"/>
    </ligand>
</feature>
<feature type="binding site" evidence="1">
    <location>
        <position position="52"/>
    </location>
    <ligand>
        <name>Mg(2+)</name>
        <dbReference type="ChEBI" id="CHEBI:18420"/>
    </ligand>
</feature>
<feature type="binding site" evidence="1">
    <location>
        <position position="65"/>
    </location>
    <ligand>
        <name>Mg(2+)</name>
        <dbReference type="ChEBI" id="CHEBI:18420"/>
    </ligand>
</feature>
<feature type="binding site" evidence="1">
    <location>
        <position position="83"/>
    </location>
    <ligand>
        <name>Mg(2+)</name>
        <dbReference type="ChEBI" id="CHEBI:18420"/>
    </ligand>
</feature>
<feature type="site" description="Transition state stabilizer" evidence="1">
    <location>
        <position position="67"/>
    </location>
</feature>
<protein>
    <recommendedName>
        <fullName>Holliday junction resolvase RecU</fullName>
        <ecNumber evidence="2">3.1.21.10</ecNumber>
    </recommendedName>
    <alternativeName>
        <fullName>Recombination protein U homolog</fullName>
    </alternativeName>
</protein>
<dbReference type="EC" id="3.1.21.10" evidence="2"/>
<dbReference type="EMBL" id="AL445563">
    <property type="protein sequence ID" value="CAC13259.1"/>
    <property type="molecule type" value="Genomic_DNA"/>
</dbReference>
<dbReference type="PIR" id="F90522">
    <property type="entry name" value="F90522"/>
</dbReference>
<dbReference type="RefSeq" id="WP_010924890.1">
    <property type="nucleotide sequence ID" value="NC_002771.1"/>
</dbReference>
<dbReference type="SMR" id="Q98RC3"/>
<dbReference type="STRING" id="272635.gene:17576666"/>
<dbReference type="KEGG" id="mpu:MYPU_0860"/>
<dbReference type="eggNOG" id="COG3331">
    <property type="taxonomic scope" value="Bacteria"/>
</dbReference>
<dbReference type="HOGENOM" id="CLU_096340_2_0_14"/>
<dbReference type="BioCyc" id="MPUL272635:G1GT6-85-MONOMER"/>
<dbReference type="Proteomes" id="UP000000528">
    <property type="component" value="Chromosome"/>
</dbReference>
<dbReference type="GO" id="GO:0005737">
    <property type="term" value="C:cytoplasm"/>
    <property type="evidence" value="ECO:0007669"/>
    <property type="project" value="UniProtKB-SubCell"/>
</dbReference>
<dbReference type="GO" id="GO:0004519">
    <property type="term" value="F:endonuclease activity"/>
    <property type="evidence" value="ECO:0007669"/>
    <property type="project" value="UniProtKB-UniRule"/>
</dbReference>
<dbReference type="GO" id="GO:0000287">
    <property type="term" value="F:magnesium ion binding"/>
    <property type="evidence" value="ECO:0007669"/>
    <property type="project" value="UniProtKB-UniRule"/>
</dbReference>
<dbReference type="GO" id="GO:0003676">
    <property type="term" value="F:nucleic acid binding"/>
    <property type="evidence" value="ECO:0007669"/>
    <property type="project" value="InterPro"/>
</dbReference>
<dbReference type="GO" id="GO:0007059">
    <property type="term" value="P:chromosome segregation"/>
    <property type="evidence" value="ECO:0007669"/>
    <property type="project" value="UniProtKB-UniRule"/>
</dbReference>
<dbReference type="GO" id="GO:0006310">
    <property type="term" value="P:DNA recombination"/>
    <property type="evidence" value="ECO:0007669"/>
    <property type="project" value="UniProtKB-UniRule"/>
</dbReference>
<dbReference type="GO" id="GO:0006281">
    <property type="term" value="P:DNA repair"/>
    <property type="evidence" value="ECO:0007669"/>
    <property type="project" value="UniProtKB-UniRule"/>
</dbReference>
<dbReference type="CDD" id="cd22354">
    <property type="entry name" value="RecU-like"/>
    <property type="match status" value="1"/>
</dbReference>
<dbReference type="Gene3D" id="3.40.1350.10">
    <property type="match status" value="1"/>
</dbReference>
<dbReference type="HAMAP" id="MF_00130">
    <property type="entry name" value="RecU"/>
    <property type="match status" value="1"/>
</dbReference>
<dbReference type="InterPro" id="IPR004612">
    <property type="entry name" value="Resolv_RecU"/>
</dbReference>
<dbReference type="InterPro" id="IPR011335">
    <property type="entry name" value="Restrct_endonuc-II-like"/>
</dbReference>
<dbReference type="InterPro" id="IPR011856">
    <property type="entry name" value="tRNA_endonuc-like_dom_sf"/>
</dbReference>
<dbReference type="NCBIfam" id="NF002581">
    <property type="entry name" value="PRK02234.1-2"/>
    <property type="match status" value="1"/>
</dbReference>
<dbReference type="Pfam" id="PF03838">
    <property type="entry name" value="RecU"/>
    <property type="match status" value="1"/>
</dbReference>
<dbReference type="SUPFAM" id="SSF52980">
    <property type="entry name" value="Restriction endonuclease-like"/>
    <property type="match status" value="1"/>
</dbReference>
<reference key="1">
    <citation type="journal article" date="2001" name="Nucleic Acids Res.">
        <title>The complete genome sequence of the murine respiratory pathogen Mycoplasma pulmonis.</title>
        <authorList>
            <person name="Chambaud I."/>
            <person name="Heilig R."/>
            <person name="Ferris S."/>
            <person name="Barbe V."/>
            <person name="Samson D."/>
            <person name="Galisson F."/>
            <person name="Moszer I."/>
            <person name="Dybvig K."/>
            <person name="Wroblewski H."/>
            <person name="Viari A."/>
            <person name="Rocha E.P.C."/>
            <person name="Blanchard A."/>
        </authorList>
    </citation>
    <scope>NUCLEOTIDE SEQUENCE [LARGE SCALE GENOMIC DNA]</scope>
    <source>
        <strain>UAB CTIP</strain>
    </source>
</reference>